<name>TOLB_ALISL</name>
<reference key="1">
    <citation type="journal article" date="2008" name="BMC Genomics">
        <title>The genome sequence of the fish pathogen Aliivibrio salmonicida strain LFI1238 shows extensive evidence of gene decay.</title>
        <authorList>
            <person name="Hjerde E."/>
            <person name="Lorentzen M.S."/>
            <person name="Holden M.T."/>
            <person name="Seeger K."/>
            <person name="Paulsen S."/>
            <person name="Bason N."/>
            <person name="Churcher C."/>
            <person name="Harris D."/>
            <person name="Norbertczak H."/>
            <person name="Quail M.A."/>
            <person name="Sanders S."/>
            <person name="Thurston S."/>
            <person name="Parkhill J."/>
            <person name="Willassen N.P."/>
            <person name="Thomson N.R."/>
        </authorList>
    </citation>
    <scope>NUCLEOTIDE SEQUENCE [LARGE SCALE GENOMIC DNA]</scope>
    <source>
        <strain>LFI1238</strain>
    </source>
</reference>
<keyword id="KW-0131">Cell cycle</keyword>
<keyword id="KW-0132">Cell division</keyword>
<keyword id="KW-0574">Periplasm</keyword>
<keyword id="KW-0732">Signal</keyword>
<organism>
    <name type="scientific">Aliivibrio salmonicida (strain LFI1238)</name>
    <name type="common">Vibrio salmonicida (strain LFI1238)</name>
    <dbReference type="NCBI Taxonomy" id="316275"/>
    <lineage>
        <taxon>Bacteria</taxon>
        <taxon>Pseudomonadati</taxon>
        <taxon>Pseudomonadota</taxon>
        <taxon>Gammaproteobacteria</taxon>
        <taxon>Vibrionales</taxon>
        <taxon>Vibrionaceae</taxon>
        <taxon>Aliivibrio</taxon>
    </lineage>
</organism>
<dbReference type="EMBL" id="FM178379">
    <property type="protein sequence ID" value="CAQ79583.1"/>
    <property type="molecule type" value="Genomic_DNA"/>
</dbReference>
<dbReference type="RefSeq" id="WP_012550473.1">
    <property type="nucleotide sequence ID" value="NC_011312.1"/>
</dbReference>
<dbReference type="SMR" id="B6EGK3"/>
<dbReference type="KEGG" id="vsa:VSAL_I1898"/>
<dbReference type="eggNOG" id="COG0823">
    <property type="taxonomic scope" value="Bacteria"/>
</dbReference>
<dbReference type="HOGENOM" id="CLU_047123_0_0_6"/>
<dbReference type="Proteomes" id="UP000001730">
    <property type="component" value="Chromosome 1"/>
</dbReference>
<dbReference type="GO" id="GO:0042597">
    <property type="term" value="C:periplasmic space"/>
    <property type="evidence" value="ECO:0007669"/>
    <property type="project" value="UniProtKB-SubCell"/>
</dbReference>
<dbReference type="GO" id="GO:0051301">
    <property type="term" value="P:cell division"/>
    <property type="evidence" value="ECO:0007669"/>
    <property type="project" value="UniProtKB-UniRule"/>
</dbReference>
<dbReference type="GO" id="GO:0017038">
    <property type="term" value="P:protein import"/>
    <property type="evidence" value="ECO:0007669"/>
    <property type="project" value="InterPro"/>
</dbReference>
<dbReference type="Gene3D" id="2.120.10.30">
    <property type="entry name" value="TolB, C-terminal domain"/>
    <property type="match status" value="1"/>
</dbReference>
<dbReference type="Gene3D" id="3.40.50.10070">
    <property type="entry name" value="TolB, N-terminal domain"/>
    <property type="match status" value="1"/>
</dbReference>
<dbReference type="HAMAP" id="MF_00671">
    <property type="entry name" value="TolB"/>
    <property type="match status" value="1"/>
</dbReference>
<dbReference type="InterPro" id="IPR011042">
    <property type="entry name" value="6-blade_b-propeller_TolB-like"/>
</dbReference>
<dbReference type="InterPro" id="IPR011659">
    <property type="entry name" value="PD40"/>
</dbReference>
<dbReference type="InterPro" id="IPR014167">
    <property type="entry name" value="Tol-Pal_TolB"/>
</dbReference>
<dbReference type="InterPro" id="IPR007195">
    <property type="entry name" value="TolB_N"/>
</dbReference>
<dbReference type="NCBIfam" id="TIGR02800">
    <property type="entry name" value="propeller_TolB"/>
    <property type="match status" value="1"/>
</dbReference>
<dbReference type="PANTHER" id="PTHR36842:SF1">
    <property type="entry name" value="PROTEIN TOLB"/>
    <property type="match status" value="1"/>
</dbReference>
<dbReference type="PANTHER" id="PTHR36842">
    <property type="entry name" value="PROTEIN TOLB HOMOLOG"/>
    <property type="match status" value="1"/>
</dbReference>
<dbReference type="Pfam" id="PF07676">
    <property type="entry name" value="PD40"/>
    <property type="match status" value="3"/>
</dbReference>
<dbReference type="Pfam" id="PF04052">
    <property type="entry name" value="TolB_N"/>
    <property type="match status" value="1"/>
</dbReference>
<dbReference type="SUPFAM" id="SSF52964">
    <property type="entry name" value="TolB, N-terminal domain"/>
    <property type="match status" value="1"/>
</dbReference>
<dbReference type="SUPFAM" id="SSF69304">
    <property type="entry name" value="Tricorn protease N-terminal domain"/>
    <property type="match status" value="1"/>
</dbReference>
<accession>B6EGK3</accession>
<gene>
    <name evidence="1" type="primary">tolB</name>
    <name type="ordered locus">VSAL_I1898</name>
</gene>
<sequence length="450" mass="50271">MLKRWILPLFIACLSFSQIAKAELELVITEGVNSARPIGIVPFKWHGEGKLPQDISAIISSDLQRSGKFSPLPTNKMPQTPYKDADINYEAWTKMGVDAIVTGEVKVNAAGKYEVSYKLIDVVRGQLTKGKSKGLSNSGELVLTQDHILVNKIATLSKTQLRKYAHRISDVVYEKLTGEKGAFLTRIAYVVVNDKSQHPYQLRIADYDGYNERLVLKSKQPIMSPAWSPDGKKLAYVSFENRRSQVFIMNIYTGKRELIASYPRHNGAPRFSHDGKELAIVLSKTGSLQVYIVNLQTKKMRQITRGRSNNTEPFWAPDNKSLIFTSDRGGKPQIYRVNLEDGSTKRLTWQGSQNLGGQITPDGKYIVMVNRSETGFNLAKQDLETGAVQVLTKTLLDESPSIAPNGGMVIYSSIYRKQNVLSMVSIDGRFKARLPATNGRVRAPAWSPFL</sequence>
<proteinExistence type="inferred from homology"/>
<comment type="function">
    <text evidence="1">Part of the Tol-Pal system, which plays a role in outer membrane invagination during cell division and is important for maintaining outer membrane integrity.</text>
</comment>
<comment type="subunit">
    <text evidence="1">The Tol-Pal system is composed of five core proteins: the inner membrane proteins TolA, TolQ and TolR, the periplasmic protein TolB and the outer membrane protein Pal. They form a network linking the inner and outer membranes and the peptidoglycan layer.</text>
</comment>
<comment type="subcellular location">
    <subcellularLocation>
        <location evidence="1">Periplasm</location>
    </subcellularLocation>
</comment>
<comment type="similarity">
    <text evidence="1">Belongs to the TolB family.</text>
</comment>
<protein>
    <recommendedName>
        <fullName evidence="1">Tol-Pal system protein TolB</fullName>
    </recommendedName>
</protein>
<evidence type="ECO:0000255" key="1">
    <source>
        <dbReference type="HAMAP-Rule" id="MF_00671"/>
    </source>
</evidence>
<feature type="signal peptide" evidence="1">
    <location>
        <begin position="1"/>
        <end position="22"/>
    </location>
</feature>
<feature type="chain" id="PRO_5000405671" description="Tol-Pal system protein TolB" evidence="1">
    <location>
        <begin position="23"/>
        <end position="450"/>
    </location>
</feature>